<sequence length="320" mass="35664">MNHTSDTALLIVNLGTPEAPTAAAVRRYLGEFLSDRRVVSIPPLFWKPLLHMVILPIRGPRSASKYAKVWLQEGSPLSVYTRRIAEGLTQHLPDWRVAWAMRYGAPALTKALDALQAQQVRRIVILPLYPQYSTTTTASVQDVVEAWCKRTPQVQVECIQDYAEDSAWVAAVAASIRRHWQAHGRSEKLMFSFHGLPQRVANNGDPYPQRCQVSASLIAAALDLNESEWVLGYQSRFGAERWLQPYAEPTLWALAESGIRRFDLVCPGFSVDCLETLEEVALGFSETLAARGATMRYIPCLNDDPAHVQALAGLAQRALL</sequence>
<feature type="chain" id="PRO_0000175231" description="Ferrochelatase">
    <location>
        <begin position="1"/>
        <end position="320"/>
    </location>
</feature>
<feature type="binding site" evidence="1">
    <location>
        <position position="194"/>
    </location>
    <ligand>
        <name>Fe cation</name>
        <dbReference type="ChEBI" id="CHEBI:24875"/>
    </ligand>
</feature>
<feature type="binding site" evidence="1">
    <location>
        <position position="275"/>
    </location>
    <ligand>
        <name>Fe cation</name>
        <dbReference type="ChEBI" id="CHEBI:24875"/>
    </ligand>
</feature>
<proteinExistence type="inferred from homology"/>
<comment type="function">
    <text evidence="1">Catalyzes the ferrous insertion into protoporphyrin IX.</text>
</comment>
<comment type="catalytic activity">
    <reaction evidence="1">
        <text>heme b + 2 H(+) = protoporphyrin IX + Fe(2+)</text>
        <dbReference type="Rhea" id="RHEA:22584"/>
        <dbReference type="ChEBI" id="CHEBI:15378"/>
        <dbReference type="ChEBI" id="CHEBI:29033"/>
        <dbReference type="ChEBI" id="CHEBI:57306"/>
        <dbReference type="ChEBI" id="CHEBI:60344"/>
        <dbReference type="EC" id="4.98.1.1"/>
    </reaction>
</comment>
<comment type="pathway">
    <text evidence="1">Porphyrin-containing compound metabolism; protoheme biosynthesis; protoheme from protoporphyrin-IX: step 1/1.</text>
</comment>
<comment type="subcellular location">
    <subcellularLocation>
        <location evidence="1">Cytoplasm</location>
    </subcellularLocation>
</comment>
<comment type="similarity">
    <text evidence="1 2">Belongs to the ferrochelatase family.</text>
</comment>
<comment type="sequence caution" evidence="2">
    <conflict type="erroneous initiation">
        <sequence resource="EMBL-CDS" id="AAF83376"/>
    </conflict>
</comment>
<reference key="1">
    <citation type="journal article" date="2000" name="Nature">
        <title>The genome sequence of the plant pathogen Xylella fastidiosa.</title>
        <authorList>
            <person name="Simpson A.J.G."/>
            <person name="Reinach F.C."/>
            <person name="Arruda P."/>
            <person name="Abreu F.A."/>
            <person name="Acencio M."/>
            <person name="Alvarenga R."/>
            <person name="Alves L.M.C."/>
            <person name="Araya J.E."/>
            <person name="Baia G.S."/>
            <person name="Baptista C.S."/>
            <person name="Barros M.H."/>
            <person name="Bonaccorsi E.D."/>
            <person name="Bordin S."/>
            <person name="Bove J.M."/>
            <person name="Briones M.R.S."/>
            <person name="Bueno M.R.P."/>
            <person name="Camargo A.A."/>
            <person name="Camargo L.E.A."/>
            <person name="Carraro D.M."/>
            <person name="Carrer H."/>
            <person name="Colauto N.B."/>
            <person name="Colombo C."/>
            <person name="Costa F.F."/>
            <person name="Costa M.C.R."/>
            <person name="Costa-Neto C.M."/>
            <person name="Coutinho L.L."/>
            <person name="Cristofani M."/>
            <person name="Dias-Neto E."/>
            <person name="Docena C."/>
            <person name="El-Dorry H."/>
            <person name="Facincani A.P."/>
            <person name="Ferreira A.J.S."/>
            <person name="Ferreira V.C.A."/>
            <person name="Ferro J.A."/>
            <person name="Fraga J.S."/>
            <person name="Franca S.C."/>
            <person name="Franco M.C."/>
            <person name="Frohme M."/>
            <person name="Furlan L.R."/>
            <person name="Garnier M."/>
            <person name="Goldman G.H."/>
            <person name="Goldman M.H.S."/>
            <person name="Gomes S.L."/>
            <person name="Gruber A."/>
            <person name="Ho P.L."/>
            <person name="Hoheisel J.D."/>
            <person name="Junqueira M.L."/>
            <person name="Kemper E.L."/>
            <person name="Kitajima J.P."/>
            <person name="Krieger J.E."/>
            <person name="Kuramae E.E."/>
            <person name="Laigret F."/>
            <person name="Lambais M.R."/>
            <person name="Leite L.C.C."/>
            <person name="Lemos E.G.M."/>
            <person name="Lemos M.V.F."/>
            <person name="Lopes S.A."/>
            <person name="Lopes C.R."/>
            <person name="Machado J.A."/>
            <person name="Machado M.A."/>
            <person name="Madeira A.M.B.N."/>
            <person name="Madeira H.M.F."/>
            <person name="Marino C.L."/>
            <person name="Marques M.V."/>
            <person name="Martins E.A.L."/>
            <person name="Martins E.M.F."/>
            <person name="Matsukuma A.Y."/>
            <person name="Menck C.F.M."/>
            <person name="Miracca E.C."/>
            <person name="Miyaki C.Y."/>
            <person name="Monteiro-Vitorello C.B."/>
            <person name="Moon D.H."/>
            <person name="Nagai M.A."/>
            <person name="Nascimento A.L.T.O."/>
            <person name="Netto L.E.S."/>
            <person name="Nhani A. Jr."/>
            <person name="Nobrega F.G."/>
            <person name="Nunes L.R."/>
            <person name="Oliveira M.A."/>
            <person name="de Oliveira M.C."/>
            <person name="de Oliveira R.C."/>
            <person name="Palmieri D.A."/>
            <person name="Paris A."/>
            <person name="Peixoto B.R."/>
            <person name="Pereira G.A.G."/>
            <person name="Pereira H.A. Jr."/>
            <person name="Pesquero J.B."/>
            <person name="Quaggio R.B."/>
            <person name="Roberto P.G."/>
            <person name="Rodrigues V."/>
            <person name="de Rosa A.J.M."/>
            <person name="de Rosa V.E. Jr."/>
            <person name="de Sa R.G."/>
            <person name="Santelli R.V."/>
            <person name="Sawasaki H.E."/>
            <person name="da Silva A.C.R."/>
            <person name="da Silva A.M."/>
            <person name="da Silva F.R."/>
            <person name="Silva W.A. Jr."/>
            <person name="da Silveira J.F."/>
            <person name="Silvestri M.L.Z."/>
            <person name="Siqueira W.J."/>
            <person name="de Souza A.A."/>
            <person name="de Souza A.P."/>
            <person name="Terenzi M.F."/>
            <person name="Truffi D."/>
            <person name="Tsai S.M."/>
            <person name="Tsuhako M.H."/>
            <person name="Vallada H."/>
            <person name="Van Sluys M.A."/>
            <person name="Verjovski-Almeida S."/>
            <person name="Vettore A.L."/>
            <person name="Zago M.A."/>
            <person name="Zatz M."/>
            <person name="Meidanis J."/>
            <person name="Setubal J.C."/>
        </authorList>
    </citation>
    <scope>NUCLEOTIDE SEQUENCE [LARGE SCALE GENOMIC DNA]</scope>
    <source>
        <strain>9a5c</strain>
    </source>
</reference>
<protein>
    <recommendedName>
        <fullName evidence="1">Ferrochelatase</fullName>
        <ecNumber evidence="1">4.98.1.1</ecNumber>
    </recommendedName>
    <alternativeName>
        <fullName evidence="1">Heme synthase</fullName>
    </alternativeName>
    <alternativeName>
        <fullName evidence="1">Protoheme ferro-lyase</fullName>
    </alternativeName>
</protein>
<accession>Q9PFU1</accession>
<keyword id="KW-0963">Cytoplasm</keyword>
<keyword id="KW-0350">Heme biosynthesis</keyword>
<keyword id="KW-0408">Iron</keyword>
<keyword id="KW-0456">Lyase</keyword>
<keyword id="KW-0479">Metal-binding</keyword>
<keyword id="KW-0627">Porphyrin biosynthesis</keyword>
<evidence type="ECO:0000255" key="1">
    <source>
        <dbReference type="HAMAP-Rule" id="MF_00323"/>
    </source>
</evidence>
<evidence type="ECO:0000305" key="2"/>
<gene>
    <name evidence="1" type="primary">hemH</name>
    <name type="ordered locus">XF_0566</name>
</gene>
<dbReference type="EC" id="4.98.1.1" evidence="1"/>
<dbReference type="EMBL" id="AE003849">
    <property type="protein sequence ID" value="AAF83376.1"/>
    <property type="status" value="ALT_INIT"/>
    <property type="molecule type" value="Genomic_DNA"/>
</dbReference>
<dbReference type="PIR" id="D82791">
    <property type="entry name" value="D82791"/>
</dbReference>
<dbReference type="SMR" id="Q9PFU1"/>
<dbReference type="STRING" id="160492.XF_0566"/>
<dbReference type="KEGG" id="xfa:XF_0566"/>
<dbReference type="eggNOG" id="COG0276">
    <property type="taxonomic scope" value="Bacteria"/>
</dbReference>
<dbReference type="HOGENOM" id="CLU_018884_0_0_6"/>
<dbReference type="UniPathway" id="UPA00252">
    <property type="reaction ID" value="UER00325"/>
</dbReference>
<dbReference type="Proteomes" id="UP000000812">
    <property type="component" value="Chromosome"/>
</dbReference>
<dbReference type="GO" id="GO:0005737">
    <property type="term" value="C:cytoplasm"/>
    <property type="evidence" value="ECO:0007669"/>
    <property type="project" value="UniProtKB-SubCell"/>
</dbReference>
<dbReference type="GO" id="GO:0004325">
    <property type="term" value="F:ferrochelatase activity"/>
    <property type="evidence" value="ECO:0007669"/>
    <property type="project" value="UniProtKB-UniRule"/>
</dbReference>
<dbReference type="GO" id="GO:0046872">
    <property type="term" value="F:metal ion binding"/>
    <property type="evidence" value="ECO:0007669"/>
    <property type="project" value="UniProtKB-KW"/>
</dbReference>
<dbReference type="GO" id="GO:0006783">
    <property type="term" value="P:heme biosynthetic process"/>
    <property type="evidence" value="ECO:0007669"/>
    <property type="project" value="UniProtKB-UniRule"/>
</dbReference>
<dbReference type="CDD" id="cd00419">
    <property type="entry name" value="Ferrochelatase_C"/>
    <property type="match status" value="1"/>
</dbReference>
<dbReference type="CDD" id="cd03411">
    <property type="entry name" value="Ferrochelatase_N"/>
    <property type="match status" value="1"/>
</dbReference>
<dbReference type="FunFam" id="3.40.50.1400:FF:000012">
    <property type="entry name" value="Ferrochelatase"/>
    <property type="match status" value="1"/>
</dbReference>
<dbReference type="Gene3D" id="3.40.50.1400">
    <property type="match status" value="2"/>
</dbReference>
<dbReference type="HAMAP" id="MF_00323">
    <property type="entry name" value="Ferrochelatase"/>
    <property type="match status" value="1"/>
</dbReference>
<dbReference type="InterPro" id="IPR001015">
    <property type="entry name" value="Ferrochelatase"/>
</dbReference>
<dbReference type="InterPro" id="IPR019772">
    <property type="entry name" value="Ferrochelatase_AS"/>
</dbReference>
<dbReference type="InterPro" id="IPR033644">
    <property type="entry name" value="Ferrochelatase_C"/>
</dbReference>
<dbReference type="InterPro" id="IPR033659">
    <property type="entry name" value="Ferrochelatase_N"/>
</dbReference>
<dbReference type="NCBIfam" id="TIGR00109">
    <property type="entry name" value="hemH"/>
    <property type="match status" value="1"/>
</dbReference>
<dbReference type="PANTHER" id="PTHR11108">
    <property type="entry name" value="FERROCHELATASE"/>
    <property type="match status" value="1"/>
</dbReference>
<dbReference type="PANTHER" id="PTHR11108:SF1">
    <property type="entry name" value="FERROCHELATASE, MITOCHONDRIAL"/>
    <property type="match status" value="1"/>
</dbReference>
<dbReference type="Pfam" id="PF00762">
    <property type="entry name" value="Ferrochelatase"/>
    <property type="match status" value="1"/>
</dbReference>
<dbReference type="SUPFAM" id="SSF53800">
    <property type="entry name" value="Chelatase"/>
    <property type="match status" value="1"/>
</dbReference>
<dbReference type="PROSITE" id="PS00534">
    <property type="entry name" value="FERROCHELATASE"/>
    <property type="match status" value="1"/>
</dbReference>
<name>HEMH_XYLFA</name>
<organism>
    <name type="scientific">Xylella fastidiosa (strain 9a5c)</name>
    <dbReference type="NCBI Taxonomy" id="160492"/>
    <lineage>
        <taxon>Bacteria</taxon>
        <taxon>Pseudomonadati</taxon>
        <taxon>Pseudomonadota</taxon>
        <taxon>Gammaproteobacteria</taxon>
        <taxon>Lysobacterales</taxon>
        <taxon>Lysobacteraceae</taxon>
        <taxon>Xylella</taxon>
    </lineage>
</organism>